<organism>
    <name type="scientific">Brassica oleracea var. capitata</name>
    <name type="common">Cabbage</name>
    <dbReference type="NCBI Taxonomy" id="3716"/>
    <lineage>
        <taxon>Eukaryota</taxon>
        <taxon>Viridiplantae</taxon>
        <taxon>Streptophyta</taxon>
        <taxon>Embryophyta</taxon>
        <taxon>Tracheophyta</taxon>
        <taxon>Spermatophyta</taxon>
        <taxon>Magnoliopsida</taxon>
        <taxon>eudicotyledons</taxon>
        <taxon>Gunneridae</taxon>
        <taxon>Pentapetalae</taxon>
        <taxon>rosids</taxon>
        <taxon>malvids</taxon>
        <taxon>Brassicales</taxon>
        <taxon>Brassicaceae</taxon>
        <taxon>Brassiceae</taxon>
        <taxon>Brassica</taxon>
    </lineage>
</organism>
<keyword id="KW-0106">Calcium</keyword>
<keyword id="KW-0963">Cytoplasm</keyword>
<keyword id="KW-0903">Direct protein sequencing</keyword>
<keyword id="KW-0378">Hydrolase</keyword>
<keyword id="KW-0442">Lipid degradation</keyword>
<keyword id="KW-0443">Lipid metabolism</keyword>
<keyword id="KW-0472">Membrane</keyword>
<keyword id="KW-0479">Metal-binding</keyword>
<keyword id="KW-0677">Repeat</keyword>
<comment type="function">
    <text>Hydrolyzes glycerol-phospholipids at the terminal phosphodiesteric bond. Plays an important role in various cellular processes, including phytohormone action, vesicular trafficking, secretion, cytoskeletal arrangement, meiosis, tumor promotion, pathogenesis, membrane deterioration and senescence.</text>
</comment>
<comment type="catalytic activity">
    <reaction>
        <text>a 1,2-diacyl-sn-glycero-3-phosphocholine + H2O = a 1,2-diacyl-sn-glycero-3-phosphate + choline + H(+)</text>
        <dbReference type="Rhea" id="RHEA:14445"/>
        <dbReference type="ChEBI" id="CHEBI:15354"/>
        <dbReference type="ChEBI" id="CHEBI:15377"/>
        <dbReference type="ChEBI" id="CHEBI:15378"/>
        <dbReference type="ChEBI" id="CHEBI:57643"/>
        <dbReference type="ChEBI" id="CHEBI:58608"/>
        <dbReference type="EC" id="3.1.4.4"/>
    </reaction>
</comment>
<comment type="cofactor">
    <cofactor>
        <name>Ca(2+)</name>
        <dbReference type="ChEBI" id="CHEBI:29108"/>
    </cofactor>
    <text>Ca(2+) requirement for activity depends on pH. Active either under acidic conditions with micromolar levels of calcium (PIP2-dependent) or at neutral pH with millimolar levels of calcium (PIP2-independent).</text>
</comment>
<comment type="subcellular location">
    <subcellularLocation>
        <location evidence="1">Cytoplasm</location>
    </subcellularLocation>
    <subcellularLocation>
        <location evidence="1">Membrane</location>
        <topology evidence="1">Peripheral membrane protein</topology>
    </subcellularLocation>
</comment>
<comment type="domain">
    <text>C2 domain is a calcium-binding fold, and the binding promotes the protein association with membranes. A lower affinity toward calcium can be anticipated for PLD alpha C2 due to the absence of two potential calcium ligands.</text>
</comment>
<comment type="miscellaneous">
    <text>All eight cysteine residues were shown to have free sulfhydryl groups by mass spectrometry. The propeptide appears to play a key role in the proper folding and activation of the enzyme.</text>
</comment>
<comment type="similarity">
    <text evidence="6">Belongs to the phospholipase D family. C2-PLD subfamily.</text>
</comment>
<accession>P55939</accession>
<accession>O49981</accession>
<accession>O82548</accession>
<dbReference type="EC" id="3.1.4.4"/>
<dbReference type="EMBL" id="U85482">
    <property type="protein sequence ID" value="AAC79125.1"/>
    <property type="molecule type" value="mRNA"/>
</dbReference>
<dbReference type="EMBL" id="AF090444">
    <property type="protein sequence ID" value="AAC78486.1"/>
    <property type="molecule type" value="mRNA"/>
</dbReference>
<dbReference type="EMBL" id="AF113919">
    <property type="protein sequence ID" value="AAD17209.1"/>
    <property type="molecule type" value="Genomic_DNA"/>
</dbReference>
<dbReference type="SMR" id="P55939"/>
<dbReference type="BRENDA" id="3.1.4.4">
    <property type="organism ID" value="947"/>
</dbReference>
<dbReference type="GO" id="GO:0005737">
    <property type="term" value="C:cytoplasm"/>
    <property type="evidence" value="ECO:0007669"/>
    <property type="project" value="UniProtKB-SubCell"/>
</dbReference>
<dbReference type="GO" id="GO:0005886">
    <property type="term" value="C:plasma membrane"/>
    <property type="evidence" value="ECO:0007669"/>
    <property type="project" value="TreeGrafter"/>
</dbReference>
<dbReference type="GO" id="GO:0005509">
    <property type="term" value="F:calcium ion binding"/>
    <property type="evidence" value="ECO:0007669"/>
    <property type="project" value="InterPro"/>
</dbReference>
<dbReference type="GO" id="GO:0004630">
    <property type="term" value="F:phospholipase D activity"/>
    <property type="evidence" value="ECO:0007669"/>
    <property type="project" value="UniProtKB-EC"/>
</dbReference>
<dbReference type="GO" id="GO:0046470">
    <property type="term" value="P:phosphatidylcholine metabolic process"/>
    <property type="evidence" value="ECO:0007669"/>
    <property type="project" value="InterPro"/>
</dbReference>
<dbReference type="GO" id="GO:0009395">
    <property type="term" value="P:phospholipid catabolic process"/>
    <property type="evidence" value="ECO:0007669"/>
    <property type="project" value="TreeGrafter"/>
</dbReference>
<dbReference type="CDD" id="cd04015">
    <property type="entry name" value="C2_plant_PLD"/>
    <property type="match status" value="1"/>
</dbReference>
<dbReference type="CDD" id="cd09199">
    <property type="entry name" value="PLDc_pPLDalpha_2"/>
    <property type="match status" value="1"/>
</dbReference>
<dbReference type="FunFam" id="3.30.870.10:FF:000027">
    <property type="entry name" value="Phospholipase D"/>
    <property type="match status" value="1"/>
</dbReference>
<dbReference type="FunFam" id="2.60.40.150:FF:000266">
    <property type="entry name" value="Phospholipase D alpha 1"/>
    <property type="match status" value="1"/>
</dbReference>
<dbReference type="FunFam" id="3.30.870.10:FF:000025">
    <property type="entry name" value="Phospholipase D delta"/>
    <property type="match status" value="1"/>
</dbReference>
<dbReference type="Gene3D" id="2.60.40.150">
    <property type="entry name" value="C2 domain"/>
    <property type="match status" value="1"/>
</dbReference>
<dbReference type="Gene3D" id="3.30.870.10">
    <property type="entry name" value="Endonuclease Chain A"/>
    <property type="match status" value="2"/>
</dbReference>
<dbReference type="InterPro" id="IPR000008">
    <property type="entry name" value="C2_dom"/>
</dbReference>
<dbReference type="InterPro" id="IPR035892">
    <property type="entry name" value="C2_domain_sf"/>
</dbReference>
<dbReference type="InterPro" id="IPR001736">
    <property type="entry name" value="PLipase_D/transphosphatidylase"/>
</dbReference>
<dbReference type="InterPro" id="IPR024632">
    <property type="entry name" value="PLipase_D_C"/>
</dbReference>
<dbReference type="InterPro" id="IPR015679">
    <property type="entry name" value="PLipase_D_fam"/>
</dbReference>
<dbReference type="InterPro" id="IPR011402">
    <property type="entry name" value="PLipase_D_pln"/>
</dbReference>
<dbReference type="PANTHER" id="PTHR18896">
    <property type="entry name" value="PHOSPHOLIPASE D"/>
    <property type="match status" value="1"/>
</dbReference>
<dbReference type="PANTHER" id="PTHR18896:SF163">
    <property type="entry name" value="PHOSPHOLIPASE D"/>
    <property type="match status" value="1"/>
</dbReference>
<dbReference type="Pfam" id="PF00168">
    <property type="entry name" value="C2"/>
    <property type="match status" value="1"/>
</dbReference>
<dbReference type="Pfam" id="PF12357">
    <property type="entry name" value="PLD_C"/>
    <property type="match status" value="1"/>
</dbReference>
<dbReference type="Pfam" id="PF00614">
    <property type="entry name" value="PLDc"/>
    <property type="match status" value="2"/>
</dbReference>
<dbReference type="PIRSF" id="PIRSF036470">
    <property type="entry name" value="PLD_plant"/>
    <property type="match status" value="1"/>
</dbReference>
<dbReference type="SMART" id="SM00239">
    <property type="entry name" value="C2"/>
    <property type="match status" value="1"/>
</dbReference>
<dbReference type="SMART" id="SM00155">
    <property type="entry name" value="PLDc"/>
    <property type="match status" value="2"/>
</dbReference>
<dbReference type="SUPFAM" id="SSF49562">
    <property type="entry name" value="C2 domain (Calcium/lipid-binding domain, CaLB)"/>
    <property type="match status" value="1"/>
</dbReference>
<dbReference type="SUPFAM" id="SSF56024">
    <property type="entry name" value="Phospholipase D/nuclease"/>
    <property type="match status" value="2"/>
</dbReference>
<dbReference type="PROSITE" id="PS50004">
    <property type="entry name" value="C2"/>
    <property type="match status" value="1"/>
</dbReference>
<dbReference type="PROSITE" id="PS50035">
    <property type="entry name" value="PLD"/>
    <property type="match status" value="2"/>
</dbReference>
<reference key="1">
    <citation type="journal article" date="1999" name="Biochim. Biophys. Acta">
        <title>Molecular cloning and functional expression of a phospholipase D from cabbage (Brassica oleracea var. capitata).</title>
        <authorList>
            <person name="Kim D.-U."/>
            <person name="Roh T.-Y."/>
            <person name="Lee J."/>
            <person name="Noh J.-Y."/>
            <person name="Jang Y.-J."/>
            <person name="Hoe K.-L."/>
            <person name="Yoo H.-S."/>
            <person name="Choi M.-U."/>
        </authorList>
    </citation>
    <scope>NUCLEOTIDE SEQUENCE [MRNA]</scope>
</reference>
<reference key="2">
    <citation type="online journal article" date="1998" name="Plant Gene Register">
        <title>Identification of two isoenzymes of phospholipase D from cabbage (Brassica oleracea var. capitata).</title>
        <authorList>
            <person name="Pannenberg I."/>
            <person name="Mansfeld J."/>
            <person name="Ulbrich-Hofmann R."/>
        </authorList>
        <locator>PGR98-188</locator>
    </citation>
    <scope>NUCLEOTIDE SEQUENCE [GENOMIC DNA / MRNA]</scope>
</reference>
<reference key="3">
    <citation type="journal article" date="1993" name="Biochim. Biophys. Acta">
        <title>Improved purification and biochemical characterization of phospholipase D from cabbage.</title>
        <authorList>
            <person name="Abousalham A."/>
            <person name="Riviere M."/>
            <person name="Teissere M."/>
            <person name="Verger R."/>
        </authorList>
    </citation>
    <scope>PROTEIN SEQUENCE OF 37-68</scope>
    <source>
        <tissue>Leaf</tissue>
    </source>
</reference>
<reference key="4">
    <citation type="journal article" date="2001" name="Rapid Commun. Mass Spectrom.">
        <title>Investigation of sulfhydryl groups in cabbage phospholipase D by combination of derivatization methods and matrix-assisted laser desorption/ionization time-of-flight mass spectrometry.</title>
        <authorList>
            <person name="Hwang I.S."/>
            <person name="Park S.J."/>
            <person name="Roh T.-Y."/>
            <person name="Choi M.-U."/>
            <person name="Kim H.J."/>
        </authorList>
    </citation>
    <scope>CHARACTERIZATION OF SULFHYDRYL GROUPS</scope>
</reference>
<sequence>MAQHLLHGTLHATIYEVDALHTGGLRSAGFLGKIISNVEETIGFGKGETQLYATIDLQKARVGRTRKITDEPKNPKWYESFHIYCAHMASDIIFTVKDDNPIGATLIGRAYVPVDEVINGEEVEKWVEILDDDRNPIHGESKIHVKLQYFAVEADRNWNMGVKSAKFPGVPYTFFSQRQGCKVSLYQGAHVPDNFVPKIPLAGGKNYEPHRCWEDIFDAITNAKHLIYITGWSVYTEITLVRDSRRPKPGGDMTLGELLKKKATEGVRVLLLVWDDRTSVDVLKKDGLMATHDEDTENYFNGSEVHCVLCPRNPDDGGSIVQNLQVSAMFTHHQKIVVVDSEVPSQGGGSEMRRIMSFVGGIDLCDGRYDTPFHSLFRTLDTVHHDDFHQPNFTGASITKGGPREPWQDIHSRLEGPIAWDVLYNFEQRWSKQGGKDILVKLRELSDIIITPSPVMFQEDHDVWNVQLFRSIDGGAAAGFPDSPEVAAEAGLVSGKDNVIDRSIQDAYIHAIRRAKDFIYIENQYFLGSSFAWAADGITPEDINALHLIPKELSLKIVDKIEKGEKFRVYVVVPMWPEGIPESASVQAILDWQRRTLEMMYKDVTQALRAQGLEEDPRNYLTFFCLGNREVKKEGEYEPAERPDPDTDYMRAQEARRFMIYVHSKMMIVDDEYIIVGSANINQRSMDGARDSEIAMGGYQPHHLSHRQPARGQVHGFRMSLWYEHLGMLDETFLDPSSLECIEKVNRIADKYWDFYSSESLEHDLPGHLLRYPISVDNEGNITELPGFEFFPDSKARILGNKVDYLPPILTT</sequence>
<feature type="propeptide" id="PRO_0000024651" evidence="5">
    <location>
        <begin position="1"/>
        <end position="36"/>
    </location>
</feature>
<feature type="chain" id="PRO_0000024652" description="Phospholipase D alpha 2">
    <location>
        <begin position="37"/>
        <end position="812"/>
    </location>
</feature>
<feature type="domain" description="C2" evidence="3">
    <location>
        <begin position="1"/>
        <end position="127"/>
    </location>
</feature>
<feature type="domain" description="PLD phosphodiesterase 1" evidence="4">
    <location>
        <begin position="328"/>
        <end position="368"/>
    </location>
</feature>
<feature type="domain" description="PLD phosphodiesterase 2" evidence="4">
    <location>
        <begin position="658"/>
        <end position="685"/>
    </location>
</feature>
<feature type="active site" evidence="4">
    <location>
        <position position="333"/>
    </location>
</feature>
<feature type="active site" evidence="4">
    <location>
        <position position="335"/>
    </location>
</feature>
<feature type="active site" evidence="4">
    <location>
        <position position="340"/>
    </location>
</feature>
<feature type="active site" evidence="4">
    <location>
        <position position="663"/>
    </location>
</feature>
<feature type="active site" evidence="4">
    <location>
        <position position="665"/>
    </location>
</feature>
<feature type="active site" evidence="4">
    <location>
        <position position="670"/>
    </location>
</feature>
<feature type="binding site" evidence="2">
    <location>
        <position position="333"/>
    </location>
    <ligand>
        <name>a 1,2-diacyl-sn-glycero-3-phosphate</name>
        <dbReference type="ChEBI" id="CHEBI:58608"/>
    </ligand>
</feature>
<feature type="binding site" evidence="2">
    <location>
        <position position="374"/>
    </location>
    <ligand>
        <name>Ca(2+)</name>
        <dbReference type="ChEBI" id="CHEBI:29108"/>
    </ligand>
</feature>
<feature type="binding site" evidence="2">
    <location>
        <position position="524"/>
    </location>
    <ligand>
        <name>a 1,2-diacyl-sn-glycero-3-phosphate</name>
        <dbReference type="ChEBI" id="CHEBI:58608"/>
    </ligand>
</feature>
<feature type="binding site" evidence="2">
    <location>
        <position position="663"/>
    </location>
    <ligand>
        <name>a 1,2-diacyl-sn-glycero-3-phosphate</name>
        <dbReference type="ChEBI" id="CHEBI:58608"/>
    </ligand>
</feature>
<feature type="binding site" evidence="2">
    <location>
        <position position="724"/>
    </location>
    <ligand>
        <name>Ca(2+)</name>
        <dbReference type="ChEBI" id="CHEBI:29108"/>
    </ligand>
</feature>
<feature type="sequence conflict" description="In Ref. 3; AA sequence." evidence="6" ref="3">
    <original>Q</original>
    <variation>E</variation>
    <location>
        <position position="50"/>
    </location>
</feature>
<proteinExistence type="evidence at protein level"/>
<gene>
    <name type="primary">PLD2</name>
</gene>
<protein>
    <recommendedName>
        <fullName>Phospholipase D alpha 2</fullName>
        <shortName>PLD 2</shortName>
        <ecNumber>3.1.4.4</ecNumber>
    </recommendedName>
    <alternativeName>
        <fullName>Choline phosphatase 2</fullName>
    </alternativeName>
    <alternativeName>
        <fullName>Phosphatidylcholine-hydrolyzing phospholipase D 2</fullName>
    </alternativeName>
</protein>
<name>PLDA2_BRAOC</name>
<evidence type="ECO:0000250" key="1"/>
<evidence type="ECO:0000250" key="2">
    <source>
        <dbReference type="UniProtKB" id="Q38882"/>
    </source>
</evidence>
<evidence type="ECO:0000255" key="3">
    <source>
        <dbReference type="PROSITE-ProRule" id="PRU00041"/>
    </source>
</evidence>
<evidence type="ECO:0000255" key="4">
    <source>
        <dbReference type="PROSITE-ProRule" id="PRU00153"/>
    </source>
</evidence>
<evidence type="ECO:0000269" key="5">
    <source>
    </source>
</evidence>
<evidence type="ECO:0000305" key="6"/>